<keyword id="KW-0002">3D-structure</keyword>
<keyword id="KW-0150">Chloroplast</keyword>
<keyword id="KW-0507">mRNA processing</keyword>
<keyword id="KW-0934">Plastid</keyword>
<keyword id="KW-1185">Reference proteome</keyword>
<keyword id="KW-0677">Repeat</keyword>
<keyword id="KW-0809">Transit peptide</keyword>
<reference key="1">
    <citation type="journal article" date="2000" name="Nature">
        <title>Sequence and analysis of chromosome 3 of the plant Arabidopsis thaliana.</title>
        <authorList>
            <person name="Salanoubat M."/>
            <person name="Lemcke K."/>
            <person name="Rieger M."/>
            <person name="Ansorge W."/>
            <person name="Unseld M."/>
            <person name="Fartmann B."/>
            <person name="Valle G."/>
            <person name="Bloecker H."/>
            <person name="Perez-Alonso M."/>
            <person name="Obermaier B."/>
            <person name="Delseny M."/>
            <person name="Boutry M."/>
            <person name="Grivell L.A."/>
            <person name="Mache R."/>
            <person name="Puigdomenech P."/>
            <person name="De Simone V."/>
            <person name="Choisne N."/>
            <person name="Artiguenave F."/>
            <person name="Robert C."/>
            <person name="Brottier P."/>
            <person name="Wincker P."/>
            <person name="Cattolico L."/>
            <person name="Weissenbach J."/>
            <person name="Saurin W."/>
            <person name="Quetier F."/>
            <person name="Schaefer M."/>
            <person name="Mueller-Auer S."/>
            <person name="Gabel C."/>
            <person name="Fuchs M."/>
            <person name="Benes V."/>
            <person name="Wurmbach E."/>
            <person name="Drzonek H."/>
            <person name="Erfle H."/>
            <person name="Jordan N."/>
            <person name="Bangert S."/>
            <person name="Wiedelmann R."/>
            <person name="Kranz H."/>
            <person name="Voss H."/>
            <person name="Holland R."/>
            <person name="Brandt P."/>
            <person name="Nyakatura G."/>
            <person name="Vezzi A."/>
            <person name="D'Angelo M."/>
            <person name="Pallavicini A."/>
            <person name="Toppo S."/>
            <person name="Simionati B."/>
            <person name="Conrad A."/>
            <person name="Hornischer K."/>
            <person name="Kauer G."/>
            <person name="Loehnert T.-H."/>
            <person name="Nordsiek G."/>
            <person name="Reichelt J."/>
            <person name="Scharfe M."/>
            <person name="Schoen O."/>
            <person name="Bargues M."/>
            <person name="Terol J."/>
            <person name="Climent J."/>
            <person name="Navarro P."/>
            <person name="Collado C."/>
            <person name="Perez-Perez A."/>
            <person name="Ottenwaelder B."/>
            <person name="Duchemin D."/>
            <person name="Cooke R."/>
            <person name="Laudie M."/>
            <person name="Berger-Llauro C."/>
            <person name="Purnelle B."/>
            <person name="Masuy D."/>
            <person name="de Haan M."/>
            <person name="Maarse A.C."/>
            <person name="Alcaraz J.-P."/>
            <person name="Cottet A."/>
            <person name="Casacuberta E."/>
            <person name="Monfort A."/>
            <person name="Argiriou A."/>
            <person name="Flores M."/>
            <person name="Liguori R."/>
            <person name="Vitale D."/>
            <person name="Mannhaupt G."/>
            <person name="Haase D."/>
            <person name="Schoof H."/>
            <person name="Rudd S."/>
            <person name="Zaccaria P."/>
            <person name="Mewes H.-W."/>
            <person name="Mayer K.F.X."/>
            <person name="Kaul S."/>
            <person name="Town C.D."/>
            <person name="Koo H.L."/>
            <person name="Tallon L.J."/>
            <person name="Jenkins J."/>
            <person name="Rooney T."/>
            <person name="Rizzo M."/>
            <person name="Walts A."/>
            <person name="Utterback T."/>
            <person name="Fujii C.Y."/>
            <person name="Shea T.P."/>
            <person name="Creasy T.H."/>
            <person name="Haas B."/>
            <person name="Maiti R."/>
            <person name="Wu D."/>
            <person name="Peterson J."/>
            <person name="Van Aken S."/>
            <person name="Pai G."/>
            <person name="Militscher J."/>
            <person name="Sellers P."/>
            <person name="Gill J.E."/>
            <person name="Feldblyum T.V."/>
            <person name="Preuss D."/>
            <person name="Lin X."/>
            <person name="Nierman W.C."/>
            <person name="Salzberg S.L."/>
            <person name="White O."/>
            <person name="Venter J.C."/>
            <person name="Fraser C.M."/>
            <person name="Kaneko T."/>
            <person name="Nakamura Y."/>
            <person name="Sato S."/>
            <person name="Kato T."/>
            <person name="Asamizu E."/>
            <person name="Sasamoto S."/>
            <person name="Kimura T."/>
            <person name="Idesawa K."/>
            <person name="Kawashima K."/>
            <person name="Kishida Y."/>
            <person name="Kiyokawa C."/>
            <person name="Kohara M."/>
            <person name="Matsumoto M."/>
            <person name="Matsuno A."/>
            <person name="Muraki A."/>
            <person name="Nakayama S."/>
            <person name="Nakazaki N."/>
            <person name="Shinpo S."/>
            <person name="Takeuchi C."/>
            <person name="Wada T."/>
            <person name="Watanabe A."/>
            <person name="Yamada M."/>
            <person name="Yasuda M."/>
            <person name="Tabata S."/>
        </authorList>
    </citation>
    <scope>NUCLEOTIDE SEQUENCE [LARGE SCALE GENOMIC DNA]</scope>
    <source>
        <strain>cv. Columbia</strain>
    </source>
</reference>
<reference key="2">
    <citation type="journal article" date="2017" name="Plant J.">
        <title>Araport11: a complete reannotation of the Arabidopsis thaliana reference genome.</title>
        <authorList>
            <person name="Cheng C.Y."/>
            <person name="Krishnakumar V."/>
            <person name="Chan A.P."/>
            <person name="Thibaud-Nissen F."/>
            <person name="Schobel S."/>
            <person name="Town C.D."/>
        </authorList>
    </citation>
    <scope>GENOME REANNOTATION</scope>
    <source>
        <strain>cv. Columbia</strain>
    </source>
</reference>
<reference key="3">
    <citation type="journal article" date="2004" name="Plant Cell">
        <title>Genome-wide analysis of Arabidopsis pentatricopeptide repeat proteins reveals their essential role in organelle biogenesis.</title>
        <authorList>
            <person name="Lurin C."/>
            <person name="Andres C."/>
            <person name="Aubourg S."/>
            <person name="Bellaoui M."/>
            <person name="Bitton F."/>
            <person name="Bruyere C."/>
            <person name="Caboche M."/>
            <person name="Debast C."/>
            <person name="Gualberto J."/>
            <person name="Hoffmann B."/>
            <person name="Lecharny A."/>
            <person name="Le Ret M."/>
            <person name="Martin-Magniette M.-L."/>
            <person name="Mireau H."/>
            <person name="Peeters N."/>
            <person name="Renou J.-P."/>
            <person name="Szurek B."/>
            <person name="Taconnat L."/>
            <person name="Small I."/>
        </authorList>
    </citation>
    <scope>GENE FAMILY</scope>
</reference>
<reference key="4">
    <citation type="journal article" date="2009" name="Plant Cell">
        <title>A study of new Arabidopsis chloroplast RNA editing mutants reveals general features of editing factors and their target sites.</title>
        <authorList>
            <person name="Hammani K."/>
            <person name="Okuda K."/>
            <person name="Tanz S.K."/>
            <person name="Chateigner-Boutin A.L."/>
            <person name="Shikanai T."/>
            <person name="Small I."/>
        </authorList>
    </citation>
    <scope>FUNCTION</scope>
    <scope>SUBCELLULAR LOCATION</scope>
    <scope>DISRUPTION PHENOTYPE</scope>
</reference>
<accession>Q9M1V3</accession>
<accession>F4J0Z5</accession>
<comment type="function">
    <text evidence="2">Involved in RNA editing event in chloroplasts. Required for the editing of a single site in rps14 transcript.</text>
</comment>
<comment type="subcellular location">
    <subcellularLocation>
        <location evidence="2">Plastid</location>
        <location evidence="2">Chloroplast</location>
    </subcellularLocation>
</comment>
<comment type="disruption phenotype">
    <text evidence="2">No visible phenotype under normal growth conditions.</text>
</comment>
<comment type="similarity">
    <text evidence="4">Belongs to the PPR family. PCMP-H subfamily.</text>
</comment>
<comment type="sequence caution" evidence="4">
    <conflict type="erroneous gene model prediction">
        <sequence resource="EMBL-CDS" id="CAB86438"/>
    </conflict>
</comment>
<comment type="online information" name="Pentatricopeptide repeat proteins">
    <link uri="https://ppr.plantenergy.uwa.edu.au"/>
</comment>
<name>PP296_ARATH</name>
<feature type="transit peptide" description="Chloroplast" evidence="1">
    <location>
        <begin position="1"/>
        <end position="64"/>
    </location>
</feature>
<feature type="chain" id="PRO_0000356155" description="Pentatricopeptide repeat-containing protein At3g63370, chloroplastic" evidence="1">
    <location>
        <begin position="65"/>
        <end position="960"/>
    </location>
</feature>
<feature type="repeat" description="PPR 1">
    <location>
        <begin position="79"/>
        <end position="109"/>
    </location>
</feature>
<feature type="repeat" description="PPR 2">
    <location>
        <begin position="115"/>
        <end position="145"/>
    </location>
</feature>
<feature type="repeat" description="PPR 3">
    <location>
        <begin position="146"/>
        <end position="180"/>
    </location>
</feature>
<feature type="repeat" description="PPR 4">
    <location>
        <begin position="181"/>
        <end position="215"/>
    </location>
</feature>
<feature type="repeat" description="PPR 5">
    <location>
        <begin position="216"/>
        <end position="246"/>
    </location>
</feature>
<feature type="repeat" description="PPR 6">
    <location>
        <begin position="248"/>
        <end position="282"/>
    </location>
</feature>
<feature type="repeat" description="PPR 7">
    <location>
        <begin position="283"/>
        <end position="317"/>
    </location>
</feature>
<feature type="repeat" description="PPR 8">
    <location>
        <begin position="319"/>
        <end position="349"/>
    </location>
</feature>
<feature type="repeat" description="PPR 9">
    <location>
        <begin position="350"/>
        <end position="384"/>
    </location>
</feature>
<feature type="repeat" description="PPR 10">
    <location>
        <begin position="385"/>
        <end position="419"/>
    </location>
</feature>
<feature type="repeat" description="PPR 11">
    <location>
        <begin position="420"/>
        <end position="450"/>
    </location>
</feature>
<feature type="repeat" description="PPR 12">
    <location>
        <begin position="451"/>
        <end position="485"/>
    </location>
</feature>
<feature type="repeat" description="PPR 13">
    <location>
        <begin position="486"/>
        <end position="516"/>
    </location>
</feature>
<feature type="repeat" description="PPR 14">
    <location>
        <begin position="520"/>
        <end position="550"/>
    </location>
</feature>
<feature type="repeat" description="PPR 15">
    <location>
        <begin position="551"/>
        <end position="585"/>
    </location>
</feature>
<feature type="repeat" description="PPR 16">
    <location>
        <begin position="586"/>
        <end position="620"/>
    </location>
</feature>
<feature type="repeat" description="PPR 17">
    <location>
        <begin position="621"/>
        <end position="651"/>
    </location>
</feature>
<feature type="repeat" description="PPR 18">
    <location>
        <begin position="652"/>
        <end position="686"/>
    </location>
</feature>
<feature type="repeat" description="PPR 19">
    <location>
        <begin position="687"/>
        <end position="717"/>
    </location>
</feature>
<feature type="repeat" description="PPR 20">
    <location>
        <begin position="723"/>
        <end position="753"/>
    </location>
</feature>
<feature type="region of interest" description="Type E motif">
    <location>
        <begin position="758"/>
        <end position="833"/>
    </location>
</feature>
<feature type="region of interest" description="Type E(+) motif">
    <location>
        <begin position="834"/>
        <end position="864"/>
    </location>
</feature>
<feature type="region of interest" description="Type DYW motif">
    <location>
        <begin position="865"/>
        <end position="960"/>
    </location>
</feature>
<feature type="strand" evidence="5">
    <location>
        <begin position="828"/>
        <end position="832"/>
    </location>
</feature>
<feature type="strand" evidence="5">
    <location>
        <begin position="835"/>
        <end position="839"/>
    </location>
</feature>
<feature type="helix" evidence="5">
    <location>
        <begin position="850"/>
        <end position="867"/>
    </location>
</feature>
<feature type="strand" evidence="5">
    <location>
        <begin position="872"/>
        <end position="878"/>
    </location>
</feature>
<feature type="strand" evidence="5">
    <location>
        <begin position="881"/>
        <end position="883"/>
    </location>
</feature>
<feature type="strand" evidence="5">
    <location>
        <begin position="885"/>
        <end position="888"/>
    </location>
</feature>
<feature type="helix" evidence="5">
    <location>
        <begin position="893"/>
        <end position="904"/>
    </location>
</feature>
<feature type="strand" evidence="5">
    <location>
        <begin position="911"/>
        <end position="917"/>
    </location>
</feature>
<feature type="helix" evidence="5">
    <location>
        <begin position="921"/>
        <end position="933"/>
    </location>
</feature>
<feature type="strand" evidence="5">
    <location>
        <begin position="938"/>
        <end position="941"/>
    </location>
</feature>
<feature type="strand" evidence="5">
    <location>
        <begin position="946"/>
        <end position="950"/>
    </location>
</feature>
<feature type="turn" evidence="5">
    <location>
        <begin position="955"/>
        <end position="958"/>
    </location>
</feature>
<dbReference type="EMBL" id="AL138648">
    <property type="protein sequence ID" value="CAB86438.1"/>
    <property type="status" value="ALT_SEQ"/>
    <property type="molecule type" value="Genomic_DNA"/>
</dbReference>
<dbReference type="EMBL" id="CP002686">
    <property type="protein sequence ID" value="AEE80472.2"/>
    <property type="molecule type" value="Genomic_DNA"/>
</dbReference>
<dbReference type="PIR" id="T48126">
    <property type="entry name" value="T48126"/>
</dbReference>
<dbReference type="RefSeq" id="NP_001319827.1">
    <property type="nucleotide sequence ID" value="NM_001340211.1"/>
</dbReference>
<dbReference type="PDB" id="7O4E">
    <property type="method" value="X-ray"/>
    <property type="resolution" value="2.50 A"/>
    <property type="chains" value="A/B=826-960"/>
</dbReference>
<dbReference type="PDB" id="7O4F">
    <property type="method" value="X-ray"/>
    <property type="resolution" value="1.65 A"/>
    <property type="chains" value="A/B/D/G=826-960"/>
</dbReference>
<dbReference type="PDBsum" id="7O4E"/>
<dbReference type="PDBsum" id="7O4F"/>
<dbReference type="SMR" id="Q9M1V3"/>
<dbReference type="FunCoup" id="Q9M1V3">
    <property type="interactions" value="284"/>
</dbReference>
<dbReference type="STRING" id="3702.Q9M1V3"/>
<dbReference type="PaxDb" id="3702-AT3G63370.1"/>
<dbReference type="ProteomicsDB" id="249203"/>
<dbReference type="EnsemblPlants" id="AT3G63370.1">
    <property type="protein sequence ID" value="AT3G63370.1"/>
    <property type="gene ID" value="AT3G63370"/>
</dbReference>
<dbReference type="GeneID" id="825512"/>
<dbReference type="Gramene" id="AT3G63370.1">
    <property type="protein sequence ID" value="AT3G63370.1"/>
    <property type="gene ID" value="AT3G63370"/>
</dbReference>
<dbReference type="KEGG" id="ath:AT3G63370"/>
<dbReference type="Araport" id="AT3G63370"/>
<dbReference type="TAIR" id="AT3G63370">
    <property type="gene designation" value="OTP86"/>
</dbReference>
<dbReference type="eggNOG" id="KOG4197">
    <property type="taxonomic scope" value="Eukaryota"/>
</dbReference>
<dbReference type="HOGENOM" id="CLU_002706_15_6_1"/>
<dbReference type="InParanoid" id="Q9M1V3"/>
<dbReference type="PhylomeDB" id="Q9M1V3"/>
<dbReference type="PRO" id="PR:Q9M1V3"/>
<dbReference type="Proteomes" id="UP000006548">
    <property type="component" value="Chromosome 3"/>
</dbReference>
<dbReference type="ExpressionAtlas" id="Q9M1V3">
    <property type="expression patterns" value="baseline and differential"/>
</dbReference>
<dbReference type="GO" id="GO:0009507">
    <property type="term" value="C:chloroplast"/>
    <property type="evidence" value="ECO:0000314"/>
    <property type="project" value="TAIR"/>
</dbReference>
<dbReference type="GO" id="GO:0003729">
    <property type="term" value="F:mRNA binding"/>
    <property type="evidence" value="ECO:0000314"/>
    <property type="project" value="TAIR"/>
</dbReference>
<dbReference type="GO" id="GO:0008270">
    <property type="term" value="F:zinc ion binding"/>
    <property type="evidence" value="ECO:0007669"/>
    <property type="project" value="InterPro"/>
</dbReference>
<dbReference type="GO" id="GO:0031425">
    <property type="term" value="P:chloroplast RNA processing"/>
    <property type="evidence" value="ECO:0000315"/>
    <property type="project" value="TAIR"/>
</dbReference>
<dbReference type="GO" id="GO:0006397">
    <property type="term" value="P:mRNA processing"/>
    <property type="evidence" value="ECO:0007669"/>
    <property type="project" value="UniProtKB-KW"/>
</dbReference>
<dbReference type="GO" id="GO:0009451">
    <property type="term" value="P:RNA modification"/>
    <property type="evidence" value="ECO:0007669"/>
    <property type="project" value="InterPro"/>
</dbReference>
<dbReference type="FunFam" id="1.25.40.10:FF:000344">
    <property type="entry name" value="Pentatricopeptide repeat-containing protein"/>
    <property type="match status" value="1"/>
</dbReference>
<dbReference type="FunFam" id="1.25.40.10:FF:000725">
    <property type="entry name" value="Pentatricopeptide repeat-containing protein At3g63370, chloroplastic"/>
    <property type="match status" value="1"/>
</dbReference>
<dbReference type="FunFam" id="1.25.40.10:FF:000073">
    <property type="entry name" value="Pentatricopeptide repeat-containing protein chloroplastic"/>
    <property type="match status" value="1"/>
</dbReference>
<dbReference type="FunFam" id="1.25.40.10:FF:000496">
    <property type="entry name" value="Pentatricopeptide repeat-containing protein chloroplastic"/>
    <property type="match status" value="1"/>
</dbReference>
<dbReference type="FunFam" id="1.25.40.10:FF:000090">
    <property type="entry name" value="Pentatricopeptide repeat-containing protein, chloroplastic"/>
    <property type="match status" value="1"/>
</dbReference>
<dbReference type="Gene3D" id="1.25.40.10">
    <property type="entry name" value="Tetratricopeptide repeat domain"/>
    <property type="match status" value="6"/>
</dbReference>
<dbReference type="InterPro" id="IPR032867">
    <property type="entry name" value="DYW_dom"/>
</dbReference>
<dbReference type="InterPro" id="IPR046848">
    <property type="entry name" value="E_motif"/>
</dbReference>
<dbReference type="InterPro" id="IPR046849">
    <property type="entry name" value="Eplus_motif"/>
</dbReference>
<dbReference type="InterPro" id="IPR002885">
    <property type="entry name" value="Pentatricopeptide_rpt"/>
</dbReference>
<dbReference type="InterPro" id="IPR046960">
    <property type="entry name" value="PPR_At4g14850-like_plant"/>
</dbReference>
<dbReference type="InterPro" id="IPR011990">
    <property type="entry name" value="TPR-like_helical_dom_sf"/>
</dbReference>
<dbReference type="NCBIfam" id="TIGR00756">
    <property type="entry name" value="PPR"/>
    <property type="match status" value="5"/>
</dbReference>
<dbReference type="PANTHER" id="PTHR47926:SF533">
    <property type="entry name" value="DYW DOMAIN-CONTAINING PROTEIN"/>
    <property type="match status" value="1"/>
</dbReference>
<dbReference type="PANTHER" id="PTHR47926">
    <property type="entry name" value="PENTATRICOPEPTIDE REPEAT-CONTAINING PROTEIN"/>
    <property type="match status" value="1"/>
</dbReference>
<dbReference type="Pfam" id="PF14432">
    <property type="entry name" value="DYW_deaminase"/>
    <property type="match status" value="1"/>
</dbReference>
<dbReference type="Pfam" id="PF20431">
    <property type="entry name" value="E_motif"/>
    <property type="match status" value="1"/>
</dbReference>
<dbReference type="Pfam" id="PF20430">
    <property type="entry name" value="Eplus_motif"/>
    <property type="match status" value="1"/>
</dbReference>
<dbReference type="Pfam" id="PF01535">
    <property type="entry name" value="PPR"/>
    <property type="match status" value="9"/>
</dbReference>
<dbReference type="Pfam" id="PF13041">
    <property type="entry name" value="PPR_2"/>
    <property type="match status" value="2"/>
</dbReference>
<dbReference type="PROSITE" id="PS51375">
    <property type="entry name" value="PPR"/>
    <property type="match status" value="17"/>
</dbReference>
<evidence type="ECO:0000255" key="1"/>
<evidence type="ECO:0000269" key="2">
    <source>
    </source>
</evidence>
<evidence type="ECO:0000303" key="3">
    <source>
    </source>
</evidence>
<evidence type="ECO:0000305" key="4"/>
<evidence type="ECO:0007829" key="5">
    <source>
        <dbReference type="PDB" id="7O4F"/>
    </source>
</evidence>
<gene>
    <name type="primary">PCMP-H83</name>
    <name evidence="3" type="synonym">OTP86</name>
    <name type="ordered locus">At3g63370</name>
    <name type="ORF">F16M2_220</name>
</gene>
<protein>
    <recommendedName>
        <fullName evidence="4">Pentatricopeptide repeat-containing protein At3g63370, chloroplastic</fullName>
    </recommendedName>
    <alternativeName>
        <fullName evidence="3">Protein ORGANELLE TRANSCRIPT PROCESSING 86</fullName>
    </alternativeName>
</protein>
<sequence length="960" mass="107520">MEYAVTNMRLLSNMMYSASAISFPRVRLHCSIPTEPSCRRNPFRQSNQPVQVPSPKLACFDGVLTEAFQRLDVSENNSPVEAFAYVLELCGKRRAVSQGRQLHSRIFKTFPSFELDFLAGKLVFMYGKCGSLDDAEKVFDEMPDRTAFAWNTMIGAYVSNGEPASALALYWNMRVEGVPLGLSSFPALLKACAKLRDIRSGSELHSLLVKLGYHSTGFIVNALVSMYAKNDDLSAARRLFDGFQEKGDAVLWNSILSSYSTSGKSLETLELFREMHMTGPAPNSYTIVSALTACDGFSYAKLGKEIHASVLKSSTHSSELYVCNALIAMYTRCGKMPQAERILRQMNNADVVTWNSLIKGYVQNLMYKEALEFFSDMIAAGHKSDEVSMTSIIAASGRLSNLLAGMELHAYVIKHGWDSNLQVGNTLIDMYSKCNLTCYMGRAFLRMHDKDLISWTTVIAGYAQNDCHVEALELFRDVAKKRMEIDEMILGSILRASSVLKSMLIVKEIHCHILRKGLLDTVIQNELVDVYGKCRNMGYATRVFESIKGKDVVSWTSMISSSALNGNESEAVELFRRMVETGLSADSVALLCILSAAASLSALNKGREIHCYLLRKGFCLEGSIAVAVVDMYACCGDLQSAKAVFDRIERKGLLQYTSMINAYGMHGCGKAAVELFDKMRHENVSPDHISFLALLYACSHAGLLDEGRGFLKIMEHEYELEPWPEHYVCLVDMLGRANCVVEAFEFVKMMKTEPTAEVWCALLAACRSHSEKEIGEIAAQRLLELEPKNPGNLVLVSNVFAEQGRWNDVEKVRAKMKASGMEKHPGCSWIEMDGKVHKFTARDKSHPESKEIYEKLSEVTRKLEREVGYVADTKFVLHNVDEGEKVQMLHGHSERIAIAYGLLRTPDRACLRITKNLRVCRDCHTFCKLVSKLFRRDIVMRDANRFHHFESGLCSCGDSW</sequence>
<organism>
    <name type="scientific">Arabidopsis thaliana</name>
    <name type="common">Mouse-ear cress</name>
    <dbReference type="NCBI Taxonomy" id="3702"/>
    <lineage>
        <taxon>Eukaryota</taxon>
        <taxon>Viridiplantae</taxon>
        <taxon>Streptophyta</taxon>
        <taxon>Embryophyta</taxon>
        <taxon>Tracheophyta</taxon>
        <taxon>Spermatophyta</taxon>
        <taxon>Magnoliopsida</taxon>
        <taxon>eudicotyledons</taxon>
        <taxon>Gunneridae</taxon>
        <taxon>Pentapetalae</taxon>
        <taxon>rosids</taxon>
        <taxon>malvids</taxon>
        <taxon>Brassicales</taxon>
        <taxon>Brassicaceae</taxon>
        <taxon>Camelineae</taxon>
        <taxon>Arabidopsis</taxon>
    </lineage>
</organism>
<proteinExistence type="evidence at transcript level"/>